<evidence type="ECO:0000255" key="1">
    <source>
        <dbReference type="HAMAP-Rule" id="MF_01810"/>
    </source>
</evidence>
<evidence type="ECO:0000256" key="2">
    <source>
        <dbReference type="SAM" id="MobiDB-lite"/>
    </source>
</evidence>
<evidence type="ECO:0000305" key="3"/>
<organism>
    <name type="scientific">Leptospira interrogans serogroup Icterohaemorrhagiae serovar Lai (strain 56601)</name>
    <dbReference type="NCBI Taxonomy" id="189518"/>
    <lineage>
        <taxon>Bacteria</taxon>
        <taxon>Pseudomonadati</taxon>
        <taxon>Spirochaetota</taxon>
        <taxon>Spirochaetia</taxon>
        <taxon>Leptospirales</taxon>
        <taxon>Leptospiraceae</taxon>
        <taxon>Leptospira</taxon>
    </lineage>
</organism>
<protein>
    <recommendedName>
        <fullName evidence="1">Membrane protein insertase YidC</fullName>
    </recommendedName>
    <alternativeName>
        <fullName evidence="1">Foldase YidC</fullName>
    </alternativeName>
    <alternativeName>
        <fullName evidence="1">Membrane integrase YidC</fullName>
    </alternativeName>
    <alternativeName>
        <fullName evidence="1">Membrane protein YidC</fullName>
    </alternativeName>
</protein>
<keyword id="KW-0997">Cell inner membrane</keyword>
<keyword id="KW-1003">Cell membrane</keyword>
<keyword id="KW-0143">Chaperone</keyword>
<keyword id="KW-0472">Membrane</keyword>
<keyword id="KW-0653">Protein transport</keyword>
<keyword id="KW-1185">Reference proteome</keyword>
<keyword id="KW-0812">Transmembrane</keyword>
<keyword id="KW-1133">Transmembrane helix</keyword>
<keyword id="KW-0813">Transport</keyword>
<accession>P97041</accession>
<accession>Q8F9L4</accession>
<sequence>MEDRQTRLFLALILSMGIWMGVNYFFFPNTSTKKNTETKQTQSDKTSENTKQQITSGKTKESNSADPVVQKEKITPFDTKKSFIVTDSYIVEFSSLGGKISKFYMKDFTGPNGELIQVARKNPETVVVDGKSYQAVELSRDKGFDFNFSDSLVEISDSPWNYIQFSLTEDKINHSISFSAVSPDRSYQLKKEFRFYPSENYFKLSISIINFSKEKLSFASQKNVRYLRTFGSLGPYPKDRPLSDRDTANFFRFYYLGGSFQDTLDGSSSVGFWSSVGNFFTGNSGTDESFSIKTDKESGVDFAGTGSRYFIAVADPLDHKPHGIVLDNRPKNESGAVLVYDNILLNPGENYNLDFASYIGIRESEGMAFKNPELDPSQSKNSPFVGLSSDLNKSFNQGITTPFRNGIIWILKQIYRFTIPNYGWSIIIFAILFKLVFYPLNQKQADSMKKMQELSPQLKTINEKFANDPKMRQQKTMELYKKNNVNPVGGCLPMVIQIPIFIALYTAFSDTIDLWNSPFLWVKDLSEPDVIWTSPAIPYFTQTGIGLNLLALLMVGTQVFQTRMTSVSMDPNQKMLMYVMPVMMLYIFWNMPSGVTLYWTFQNVLSIGQQWITNHLKKTEEKKKAKV</sequence>
<feature type="chain" id="PRO_0000124721" description="Membrane protein insertase YidC">
    <location>
        <begin position="1"/>
        <end position="627"/>
    </location>
</feature>
<feature type="transmembrane region" description="Helical" evidence="1">
    <location>
        <begin position="8"/>
        <end position="28"/>
    </location>
</feature>
<feature type="transmembrane region" description="Helical" evidence="1">
    <location>
        <begin position="417"/>
        <end position="437"/>
    </location>
</feature>
<feature type="transmembrane region" description="Helical" evidence="1">
    <location>
        <begin position="488"/>
        <end position="508"/>
    </location>
</feature>
<feature type="transmembrane region" description="Helical" evidence="1">
    <location>
        <begin position="536"/>
        <end position="556"/>
    </location>
</feature>
<feature type="transmembrane region" description="Helical" evidence="1">
    <location>
        <begin position="575"/>
        <end position="595"/>
    </location>
</feature>
<feature type="region of interest" description="Disordered" evidence="2">
    <location>
        <begin position="33"/>
        <end position="68"/>
    </location>
</feature>
<feature type="compositionally biased region" description="Polar residues" evidence="2">
    <location>
        <begin position="33"/>
        <end position="57"/>
    </location>
</feature>
<feature type="compositionally biased region" description="Basic and acidic residues" evidence="2">
    <location>
        <begin position="58"/>
        <end position="68"/>
    </location>
</feature>
<feature type="sequence conflict" description="In Ref. 1; BAA19448/BAA24371." evidence="3" ref="1">
    <original>L</original>
    <variation>F</variation>
    <location>
        <position position="374"/>
    </location>
</feature>
<proteinExistence type="inferred from homology"/>
<dbReference type="EMBL" id="AB001721">
    <property type="protein sequence ID" value="BAA19448.1"/>
    <property type="molecule type" value="Genomic_DNA"/>
</dbReference>
<dbReference type="EMBL" id="AB010203">
    <property type="protein sequence ID" value="BAA24371.1"/>
    <property type="molecule type" value="Genomic_DNA"/>
</dbReference>
<dbReference type="EMBL" id="AE010300">
    <property type="protein sequence ID" value="AAN47377.1"/>
    <property type="molecule type" value="Genomic_DNA"/>
</dbReference>
<dbReference type="PIR" id="T00124">
    <property type="entry name" value="T00124"/>
</dbReference>
<dbReference type="RefSeq" id="NP_710359.1">
    <property type="nucleotide sequence ID" value="NC_004342.2"/>
</dbReference>
<dbReference type="RefSeq" id="WP_000390191.1">
    <property type="nucleotide sequence ID" value="NC_004342.2"/>
</dbReference>
<dbReference type="SMR" id="P97041"/>
<dbReference type="STRING" id="189518.LA_0178"/>
<dbReference type="PaxDb" id="189518-LA_0178"/>
<dbReference type="EnsemblBacteria" id="AAN47377">
    <property type="protein sequence ID" value="AAN47377"/>
    <property type="gene ID" value="LA_0178"/>
</dbReference>
<dbReference type="KEGG" id="lil:LA_0178"/>
<dbReference type="PATRIC" id="fig|189518.3.peg.177"/>
<dbReference type="HOGENOM" id="CLU_016535_3_0_12"/>
<dbReference type="InParanoid" id="P97041"/>
<dbReference type="OrthoDB" id="9780552at2"/>
<dbReference type="Proteomes" id="UP000001408">
    <property type="component" value="Chromosome I"/>
</dbReference>
<dbReference type="GO" id="GO:0005886">
    <property type="term" value="C:plasma membrane"/>
    <property type="evidence" value="ECO:0000318"/>
    <property type="project" value="GO_Central"/>
</dbReference>
<dbReference type="GO" id="GO:0032977">
    <property type="term" value="F:membrane insertase activity"/>
    <property type="evidence" value="ECO:0000318"/>
    <property type="project" value="GO_Central"/>
</dbReference>
<dbReference type="GO" id="GO:0051205">
    <property type="term" value="P:protein insertion into membrane"/>
    <property type="evidence" value="ECO:0000318"/>
    <property type="project" value="GO_Central"/>
</dbReference>
<dbReference type="GO" id="GO:0015031">
    <property type="term" value="P:protein transport"/>
    <property type="evidence" value="ECO:0007669"/>
    <property type="project" value="UniProtKB-KW"/>
</dbReference>
<dbReference type="CDD" id="cd20070">
    <property type="entry name" value="5TM_YidC_Alb3"/>
    <property type="match status" value="1"/>
</dbReference>
<dbReference type="Gene3D" id="2.70.98.90">
    <property type="match status" value="1"/>
</dbReference>
<dbReference type="HAMAP" id="MF_01810">
    <property type="entry name" value="YidC_type1"/>
    <property type="match status" value="1"/>
</dbReference>
<dbReference type="InterPro" id="IPR019998">
    <property type="entry name" value="Membr_insert_YidC"/>
</dbReference>
<dbReference type="InterPro" id="IPR001708">
    <property type="entry name" value="YidC/ALB3/OXA1/COX18"/>
</dbReference>
<dbReference type="InterPro" id="IPR028055">
    <property type="entry name" value="YidC/Oxa/ALB_C"/>
</dbReference>
<dbReference type="InterPro" id="IPR047196">
    <property type="entry name" value="YidC_ALB_C"/>
</dbReference>
<dbReference type="InterPro" id="IPR038221">
    <property type="entry name" value="YidC_periplasmic_sf"/>
</dbReference>
<dbReference type="NCBIfam" id="TIGR03592">
    <property type="entry name" value="yidC_oxa1_cterm"/>
    <property type="match status" value="1"/>
</dbReference>
<dbReference type="PANTHER" id="PTHR12428:SF65">
    <property type="entry name" value="CYTOCHROME C OXIDASE ASSEMBLY PROTEIN COX18, MITOCHONDRIAL"/>
    <property type="match status" value="1"/>
</dbReference>
<dbReference type="PANTHER" id="PTHR12428">
    <property type="entry name" value="OXA1"/>
    <property type="match status" value="1"/>
</dbReference>
<dbReference type="Pfam" id="PF02096">
    <property type="entry name" value="60KD_IMP"/>
    <property type="match status" value="1"/>
</dbReference>
<reference key="1">
    <citation type="journal article" date="1998" name="Gene">
        <title>Physical and genetic maps of the Leptospira interrogans serovar icterohaemorrhagiae strain Ictero No.1 chromosome and sequencing of a 19-kb region of the genome containing the 5S rRNA gene.</title>
        <authorList>
            <person name="Takahashi Y."/>
            <person name="Akase K."/>
            <person name="Hirano H."/>
            <person name="Fukunaga M."/>
        </authorList>
    </citation>
    <scope>NUCLEOTIDE SEQUENCE [GENOMIC DNA]</scope>
    <source>
        <strain>Ictero No.1 / Serogroup Icterohaemorrhagiae</strain>
    </source>
</reference>
<reference key="2">
    <citation type="journal article" date="2003" name="Nature">
        <title>Unique physiological and pathogenic features of Leptospira interrogans revealed by whole-genome sequencing.</title>
        <authorList>
            <person name="Ren S.-X."/>
            <person name="Fu G."/>
            <person name="Jiang X.-G."/>
            <person name="Zeng R."/>
            <person name="Miao Y.-G."/>
            <person name="Xu H."/>
            <person name="Zhang Y.-X."/>
            <person name="Xiong H."/>
            <person name="Lu G."/>
            <person name="Lu L.-F."/>
            <person name="Jiang H.-Q."/>
            <person name="Jia J."/>
            <person name="Tu Y.-F."/>
            <person name="Jiang J.-X."/>
            <person name="Gu W.-Y."/>
            <person name="Zhang Y.-Q."/>
            <person name="Cai Z."/>
            <person name="Sheng H.-H."/>
            <person name="Yin H.-F."/>
            <person name="Zhang Y."/>
            <person name="Zhu G.-F."/>
            <person name="Wan M."/>
            <person name="Huang H.-L."/>
            <person name="Qian Z."/>
            <person name="Wang S.-Y."/>
            <person name="Ma W."/>
            <person name="Yao Z.-J."/>
            <person name="Shen Y."/>
            <person name="Qiang B.-Q."/>
            <person name="Xia Q.-C."/>
            <person name="Guo X.-K."/>
            <person name="Danchin A."/>
            <person name="Saint Girons I."/>
            <person name="Somerville R.L."/>
            <person name="Wen Y.-M."/>
            <person name="Shi M.-H."/>
            <person name="Chen Z."/>
            <person name="Xu J.-G."/>
            <person name="Zhao G.-P."/>
        </authorList>
    </citation>
    <scope>NUCLEOTIDE SEQUENCE [LARGE SCALE GENOMIC DNA]</scope>
    <source>
        <strain>56601</strain>
    </source>
</reference>
<name>YIDC_LEPIN</name>
<gene>
    <name evidence="1" type="primary">yidC</name>
    <name type="ordered locus">LA_0178</name>
</gene>
<comment type="function">
    <text evidence="1">Required for the insertion and/or proper folding and/or complex formation of integral membrane proteins into the membrane. Involved in integration of membrane proteins that insert both dependently and independently of the Sec translocase complex, as well as at least some lipoproteins. Aids folding of multispanning membrane proteins.</text>
</comment>
<comment type="subunit">
    <text evidence="1">Interacts with the Sec translocase complex via SecD. Specifically interacts with transmembrane segments of nascent integral membrane proteins during membrane integration.</text>
</comment>
<comment type="subcellular location">
    <subcellularLocation>
        <location evidence="1">Cell inner membrane</location>
        <topology evidence="1">Multi-pass membrane protein</topology>
    </subcellularLocation>
</comment>
<comment type="similarity">
    <text evidence="1">Belongs to the OXA1/ALB3/YidC family. Type 1 subfamily.</text>
</comment>